<name>CYAH_AZOC5</name>
<evidence type="ECO:0000255" key="1">
    <source>
        <dbReference type="HAMAP-Rule" id="MF_01989"/>
    </source>
</evidence>
<evidence type="ECO:0000269" key="2">
    <source>
    </source>
</evidence>
<comment type="function">
    <text evidence="1 2">Cyclic amide hydrolase of unknown substrate specificity. Catalyzes the hydrolytic ring-opening of a cyclic amide. Does not act on cyanuric acid nor barbituric acid.</text>
</comment>
<comment type="subunit">
    <text evidence="1">Homotetramer.</text>
</comment>
<comment type="domain">
    <text evidence="1">The monomer structure is formed from three repeating units (RUs) that share the same structure as one another. The monomer and the active site possess nearly threefold rotational symmetry, to the extent that the active site possesses three potential Ser-Lys catalytic dyads, but one of the 3 active site surfaces varies in composition suggesting it is involved in conferring substrate specificity.</text>
</comment>
<comment type="similarity">
    <text evidence="1">Belongs to the cyclic amide hydrolase (CyAH) family.</text>
</comment>
<keyword id="KW-0378">Hydrolase</keyword>
<keyword id="KW-1185">Reference proteome</keyword>
<reference key="1">
    <citation type="submission" date="2007-04" db="EMBL/GenBank/DDBJ databases">
        <title>Complete genome sequence of the nitrogen-fixing bacterium Azorhizobium caulinodans ORS571.</title>
        <authorList>
            <person name="Lee K.B."/>
            <person name="Backer P.D."/>
            <person name="Aono T."/>
            <person name="Liu C.T."/>
            <person name="Suzuki S."/>
            <person name="Suzuki T."/>
            <person name="Kaneko T."/>
            <person name="Yamada M."/>
            <person name="Tabata S."/>
            <person name="Kupfer D.M."/>
            <person name="Najar F.Z."/>
            <person name="Wiley G.B."/>
            <person name="Roe B."/>
            <person name="Binnewies T."/>
            <person name="Ussery D."/>
            <person name="Vereecke D."/>
            <person name="Gevers D."/>
            <person name="Holsters M."/>
            <person name="Oyaizu H."/>
        </authorList>
    </citation>
    <scope>NUCLEOTIDE SEQUENCE [LARGE SCALE GENOMIC DNA]</scope>
    <source>
        <strain>ATCC 43989 / DSM 5975 / JCM 20966 / LMG 6465 / NBRC 14845 / NCIMB 13405 / ORS 571</strain>
    </source>
</reference>
<reference key="2">
    <citation type="journal article" date="2012" name="J. Bacteriol.">
        <title>Defining sequence space and reaction products within the cyanuric acid hydrolase (AtzD)/barbiturase protein family.</title>
        <authorList>
            <person name="Seffernick J.L."/>
            <person name="Erickson J.S."/>
            <person name="Cameron S.M."/>
            <person name="Cho S."/>
            <person name="Dodge A.G."/>
            <person name="Richman J.E."/>
            <person name="Sadowsky M.J."/>
            <person name="Wackett L.P."/>
        </authorList>
    </citation>
    <scope>FUNCTION</scope>
</reference>
<gene>
    <name type="ordered locus">AZC_3203</name>
</gene>
<feature type="chain" id="PRO_0000439910" description="Cyclic amide hydrolase">
    <location>
        <begin position="1"/>
        <end position="366"/>
    </location>
</feature>
<feature type="region of interest" description="RU A" evidence="1">
    <location>
        <begin position="1"/>
        <end position="103"/>
    </location>
</feature>
<feature type="region of interest" description="RU B" evidence="1">
    <location>
        <begin position="110"/>
        <end position="247"/>
    </location>
</feature>
<feature type="region of interest" description="RU C" evidence="1">
    <location>
        <begin position="253"/>
        <end position="366"/>
    </location>
</feature>
<feature type="active site" evidence="1">
    <location>
        <position position="160"/>
    </location>
</feature>
<feature type="active site" description="Nucleophile" evidence="1">
    <location>
        <position position="230"/>
    </location>
</feature>
<feature type="binding site" evidence="1">
    <location>
        <position position="51"/>
    </location>
    <ligand>
        <name>substrate</name>
    </ligand>
</feature>
<feature type="binding site" evidence="1">
    <location>
        <begin position="82"/>
        <end position="83"/>
    </location>
    <ligand>
        <name>substrate</name>
    </ligand>
</feature>
<feature type="binding site" evidence="1">
    <location>
        <position position="192"/>
    </location>
    <ligand>
        <name>substrate</name>
    </ligand>
</feature>
<feature type="binding site" evidence="1">
    <location>
        <begin position="230"/>
        <end position="231"/>
    </location>
    <ligand>
        <name>substrate</name>
    </ligand>
</feature>
<feature type="binding site" evidence="1">
    <location>
        <position position="327"/>
    </location>
    <ligand>
        <name>substrate</name>
    </ligand>
</feature>
<feature type="binding site" evidence="1">
    <location>
        <begin position="346"/>
        <end position="347"/>
    </location>
    <ligand>
        <name>substrate</name>
    </ligand>
</feature>
<proteinExistence type="inferred from homology"/>
<protein>
    <recommendedName>
        <fullName evidence="1">Cyclic amide hydrolase</fullName>
        <shortName evidence="1">CyAH</shortName>
        <ecNumber evidence="1">3.5.2.-</ecNumber>
    </recommendedName>
    <alternativeName>
        <fullName evidence="1">Ring-opening amidohydrolase</fullName>
    </alternativeName>
</protein>
<dbReference type="EC" id="3.5.2.-" evidence="1"/>
<dbReference type="EMBL" id="AP009384">
    <property type="protein sequence ID" value="BAF89201.1"/>
    <property type="molecule type" value="Genomic_DNA"/>
</dbReference>
<dbReference type="RefSeq" id="WP_012171727.1">
    <property type="nucleotide sequence ID" value="NC_009937.1"/>
</dbReference>
<dbReference type="SMR" id="A8ICF8"/>
<dbReference type="STRING" id="438753.AZC_3203"/>
<dbReference type="KEGG" id="azc:AZC_3203"/>
<dbReference type="eggNOG" id="ENOG502Z8BS">
    <property type="taxonomic scope" value="Bacteria"/>
</dbReference>
<dbReference type="HOGENOM" id="CLU_808206_0_0_5"/>
<dbReference type="Proteomes" id="UP000000270">
    <property type="component" value="Chromosome"/>
</dbReference>
<dbReference type="GO" id="GO:0016812">
    <property type="term" value="F:hydrolase activity, acting on carbon-nitrogen (but not peptide) bonds, in cyclic amides"/>
    <property type="evidence" value="ECO:0007669"/>
    <property type="project" value="UniProtKB-UniRule"/>
</dbReference>
<dbReference type="Gene3D" id="3.30.1330.160">
    <property type="entry name" value="Cyanuric acid hydrolase/Barbituras, RU C"/>
    <property type="match status" value="1"/>
</dbReference>
<dbReference type="Gene3D" id="3.30.1330.170">
    <property type="entry name" value="Cyanuric acid hydrolase/Barbiturase, RU A"/>
    <property type="match status" value="1"/>
</dbReference>
<dbReference type="Gene3D" id="3.30.1330.180">
    <property type="entry name" value="Cyanuric acid hydrolase/Barbiturase, RU B"/>
    <property type="match status" value="1"/>
</dbReference>
<dbReference type="HAMAP" id="MF_01989">
    <property type="entry name" value="Cyc_amidohydrol"/>
    <property type="match status" value="1"/>
</dbReference>
<dbReference type="InterPro" id="IPR014086">
    <property type="entry name" value="AtzD/Barbiturase"/>
</dbReference>
<dbReference type="InterPro" id="IPR043008">
    <property type="entry name" value="AtzD/Barbiturase_RUA"/>
</dbReference>
<dbReference type="InterPro" id="IPR043006">
    <property type="entry name" value="AtzD/Barbiturase_RUB"/>
</dbReference>
<dbReference type="InterPro" id="IPR043007">
    <property type="entry name" value="AtzD/Barbiturase_RUC"/>
</dbReference>
<dbReference type="NCBIfam" id="TIGR02714">
    <property type="entry name" value="amido_AtzD_TrzD"/>
    <property type="match status" value="1"/>
</dbReference>
<dbReference type="Pfam" id="PF09663">
    <property type="entry name" value="Amido_AtzD_TrzD"/>
    <property type="match status" value="1"/>
</dbReference>
<accession>A8ICF8</accession>
<organism>
    <name type="scientific">Azorhizobium caulinodans (strain ATCC 43989 / DSM 5975 / JCM 20966 / LMG 6465 / NBRC 14845 / NCIMB 13405 / ORS 571)</name>
    <dbReference type="NCBI Taxonomy" id="438753"/>
    <lineage>
        <taxon>Bacteria</taxon>
        <taxon>Pseudomonadati</taxon>
        <taxon>Pseudomonadota</taxon>
        <taxon>Alphaproteobacteria</taxon>
        <taxon>Hyphomicrobiales</taxon>
        <taxon>Xanthobacteraceae</taxon>
        <taxon>Azorhizobium</taxon>
    </lineage>
</organism>
<sequence length="366" mass="37486">MKVGVHKLAMSAPGDVSELAALIETGAVNPREIVALVGKTEGNGGANDFTRGLATLSYQLLLARHLGLSPEEVGQRIAFVWSGGTEGVLSPHATLFTRAPDDGPMPAEPRLALGIGITRDIAPEEVGTTAMVEAVAGAVHTALAEAGITEPADVHYVQVKGPLLTPATIADADRRGARLVTRDPNGSKPYARGAMALGVALGLGEVAAERITPDMIACDMEVFSAVASTSAGGELTKCEVLLFGNAPGATSAFRIGHGVLKDAIDVAGVKEALRSAGLSFHGTPSEEQAHEIVAVFAKAEAPVNGRLRGRRTTMLSDADIHYERHARAAVGAVIASVTGDPAIFVSGGTEHQCAPGAAPIAAIVRA</sequence>